<gene>
    <name type="ORF">AGAP012281</name>
</gene>
<evidence type="ECO:0000255" key="1">
    <source>
        <dbReference type="HAMAP-Rule" id="MF_03012"/>
    </source>
</evidence>
<evidence type="ECO:0000255" key="2">
    <source>
        <dbReference type="PROSITE-ProRule" id="PRU01185"/>
    </source>
</evidence>
<comment type="function">
    <text evidence="1">Component of the eukaryotic translation initiation factor 3 (eIF-3) complex, which is involved in protein synthesis of a specialized repertoire of mRNAs and, together with other initiation factors, stimulates binding of mRNA and methionyl-tRNAi to the 40S ribosome. The eIF-3 complex specifically targets and initiates translation of a subset of mRNAs involved in cell proliferation.</text>
</comment>
<comment type="subunit">
    <text evidence="1">Component of the eukaryotic translation initiation factor 3 (eIF-3) complex.</text>
</comment>
<comment type="subcellular location">
    <subcellularLocation>
        <location evidence="1">Cytoplasm</location>
    </subcellularLocation>
</comment>
<comment type="similarity">
    <text evidence="1">Belongs to the eIF-3 subunit M family.</text>
</comment>
<organism>
    <name type="scientific">Anopheles gambiae</name>
    <name type="common">African malaria mosquito</name>
    <dbReference type="NCBI Taxonomy" id="7165"/>
    <lineage>
        <taxon>Eukaryota</taxon>
        <taxon>Metazoa</taxon>
        <taxon>Ecdysozoa</taxon>
        <taxon>Arthropoda</taxon>
        <taxon>Hexapoda</taxon>
        <taxon>Insecta</taxon>
        <taxon>Pterygota</taxon>
        <taxon>Neoptera</taxon>
        <taxon>Endopterygota</taxon>
        <taxon>Diptera</taxon>
        <taxon>Nematocera</taxon>
        <taxon>Culicoidea</taxon>
        <taxon>Culicidae</taxon>
        <taxon>Anophelinae</taxon>
        <taxon>Anopheles</taxon>
    </lineage>
</organism>
<protein>
    <recommendedName>
        <fullName evidence="1">Eukaryotic translation initiation factor 3 subunit M</fullName>
        <shortName evidence="1">eIF3m</shortName>
    </recommendedName>
</protein>
<accession>Q7Q068</accession>
<reference key="1">
    <citation type="journal article" date="2002" name="Science">
        <title>The genome sequence of the malaria mosquito Anopheles gambiae.</title>
        <authorList>
            <person name="Holt R.A."/>
            <person name="Subramanian G.M."/>
            <person name="Halpern A."/>
            <person name="Sutton G.G."/>
            <person name="Charlab R."/>
            <person name="Nusskern D.R."/>
            <person name="Wincker P."/>
            <person name="Clark A.G."/>
            <person name="Ribeiro J.M.C."/>
            <person name="Wides R."/>
            <person name="Salzberg S.L."/>
            <person name="Loftus B.J."/>
            <person name="Yandell M.D."/>
            <person name="Majoros W.H."/>
            <person name="Rusch D.B."/>
            <person name="Lai Z."/>
            <person name="Kraft C.L."/>
            <person name="Abril J.F."/>
            <person name="Anthouard V."/>
            <person name="Arensburger P."/>
            <person name="Atkinson P.W."/>
            <person name="Baden H."/>
            <person name="de Berardinis V."/>
            <person name="Baldwin D."/>
            <person name="Benes V."/>
            <person name="Biedler J."/>
            <person name="Blass C."/>
            <person name="Bolanos R."/>
            <person name="Boscus D."/>
            <person name="Barnstead M."/>
            <person name="Cai S."/>
            <person name="Center A."/>
            <person name="Chaturverdi K."/>
            <person name="Christophides G.K."/>
            <person name="Chrystal M.A.M."/>
            <person name="Clamp M."/>
            <person name="Cravchik A."/>
            <person name="Curwen V."/>
            <person name="Dana A."/>
            <person name="Delcher A."/>
            <person name="Dew I."/>
            <person name="Evans C.A."/>
            <person name="Flanigan M."/>
            <person name="Grundschober-Freimoser A."/>
            <person name="Friedli L."/>
            <person name="Gu Z."/>
            <person name="Guan P."/>
            <person name="Guigo R."/>
            <person name="Hillenmeyer M.E."/>
            <person name="Hladun S.L."/>
            <person name="Hogan J.R."/>
            <person name="Hong Y.S."/>
            <person name="Hoover J."/>
            <person name="Jaillon O."/>
            <person name="Ke Z."/>
            <person name="Kodira C.D."/>
            <person name="Kokoza E."/>
            <person name="Koutsos A."/>
            <person name="Letunic I."/>
            <person name="Levitsky A.A."/>
            <person name="Liang Y."/>
            <person name="Lin J.-J."/>
            <person name="Lobo N.F."/>
            <person name="Lopez J.R."/>
            <person name="Malek J.A."/>
            <person name="McIntosh T.C."/>
            <person name="Meister S."/>
            <person name="Miller J.R."/>
            <person name="Mobarry C."/>
            <person name="Mongin E."/>
            <person name="Murphy S.D."/>
            <person name="O'Brochta D.A."/>
            <person name="Pfannkoch C."/>
            <person name="Qi R."/>
            <person name="Regier M.A."/>
            <person name="Remington K."/>
            <person name="Shao H."/>
            <person name="Sharakhova M.V."/>
            <person name="Sitter C.D."/>
            <person name="Shetty J."/>
            <person name="Smith T.J."/>
            <person name="Strong R."/>
            <person name="Sun J."/>
            <person name="Thomasova D."/>
            <person name="Ton L.Q."/>
            <person name="Topalis P."/>
            <person name="Tu Z.J."/>
            <person name="Unger M.F."/>
            <person name="Walenz B."/>
            <person name="Wang A.H."/>
            <person name="Wang J."/>
            <person name="Wang M."/>
            <person name="Wang X."/>
            <person name="Woodford K.J."/>
            <person name="Wortman J.R."/>
            <person name="Wu M."/>
            <person name="Yao A."/>
            <person name="Zdobnov E.M."/>
            <person name="Zhang H."/>
            <person name="Zhao Q."/>
            <person name="Zhao S."/>
            <person name="Zhu S.C."/>
            <person name="Zhimulev I."/>
            <person name="Coluzzi M."/>
            <person name="della Torre A."/>
            <person name="Roth C.W."/>
            <person name="Louis C."/>
            <person name="Kalush F."/>
            <person name="Mural R.J."/>
            <person name="Myers E.W."/>
            <person name="Adams M.D."/>
            <person name="Smith H.O."/>
            <person name="Broder S."/>
            <person name="Gardner M.J."/>
            <person name="Fraser C.M."/>
            <person name="Birney E."/>
            <person name="Bork P."/>
            <person name="Brey P.T."/>
            <person name="Venter J.C."/>
            <person name="Weissenbach J."/>
            <person name="Kafatos F.C."/>
            <person name="Collins F.H."/>
            <person name="Hoffman S.L."/>
        </authorList>
    </citation>
    <scope>NUCLEOTIDE SEQUENCE [LARGE SCALE GENOMIC DNA]</scope>
    <source>
        <strain>PEST</strain>
    </source>
</reference>
<proteinExistence type="inferred from homology"/>
<dbReference type="EMBL" id="AAAB01008986">
    <property type="protein sequence ID" value="EAA00285.2"/>
    <property type="molecule type" value="Genomic_DNA"/>
</dbReference>
<dbReference type="SMR" id="Q7Q068"/>
<dbReference type="FunCoup" id="Q7Q068">
    <property type="interactions" value="2451"/>
</dbReference>
<dbReference type="STRING" id="7165.Q7Q068"/>
<dbReference type="PaxDb" id="7165-AGAP012281-PA"/>
<dbReference type="EnsemblMetazoa" id="AGAP012281-RA">
    <property type="protein sequence ID" value="AGAP012281-PA"/>
    <property type="gene ID" value="AGAP012281"/>
</dbReference>
<dbReference type="GeneID" id="1280407"/>
<dbReference type="KEGG" id="aga:1280407"/>
<dbReference type="CTD" id="10480"/>
<dbReference type="VEuPathDB" id="VectorBase:AGAMI1_006015"/>
<dbReference type="VEuPathDB" id="VectorBase:AGAP012281"/>
<dbReference type="eggNOG" id="KOG2753">
    <property type="taxonomic scope" value="Eukaryota"/>
</dbReference>
<dbReference type="HOGENOM" id="CLU_035254_1_0_1"/>
<dbReference type="InParanoid" id="Q7Q068"/>
<dbReference type="OMA" id="VCLKALW"/>
<dbReference type="PhylomeDB" id="Q7Q068"/>
<dbReference type="Proteomes" id="UP000007062">
    <property type="component" value="Chromosome 3L"/>
</dbReference>
<dbReference type="GO" id="GO:0016282">
    <property type="term" value="C:eukaryotic 43S preinitiation complex"/>
    <property type="evidence" value="ECO:0007669"/>
    <property type="project" value="UniProtKB-UniRule"/>
</dbReference>
<dbReference type="GO" id="GO:0033290">
    <property type="term" value="C:eukaryotic 48S preinitiation complex"/>
    <property type="evidence" value="ECO:0007669"/>
    <property type="project" value="UniProtKB-UniRule"/>
</dbReference>
<dbReference type="GO" id="GO:0005852">
    <property type="term" value="C:eukaryotic translation initiation factor 3 complex"/>
    <property type="evidence" value="ECO:0000318"/>
    <property type="project" value="GO_Central"/>
</dbReference>
<dbReference type="GO" id="GO:0071541">
    <property type="term" value="C:eukaryotic translation initiation factor 3 complex, eIF3m"/>
    <property type="evidence" value="ECO:0007669"/>
    <property type="project" value="UniProtKB-UniRule"/>
</dbReference>
<dbReference type="GO" id="GO:0003743">
    <property type="term" value="F:translation initiation factor activity"/>
    <property type="evidence" value="ECO:0007669"/>
    <property type="project" value="UniProtKB-UniRule"/>
</dbReference>
<dbReference type="GO" id="GO:0002183">
    <property type="term" value="P:cytoplasmic translational initiation"/>
    <property type="evidence" value="ECO:0000318"/>
    <property type="project" value="GO_Central"/>
</dbReference>
<dbReference type="GO" id="GO:0001732">
    <property type="term" value="P:formation of cytoplasmic translation initiation complex"/>
    <property type="evidence" value="ECO:0007669"/>
    <property type="project" value="UniProtKB-UniRule"/>
</dbReference>
<dbReference type="HAMAP" id="MF_03012">
    <property type="entry name" value="eIF3m"/>
    <property type="match status" value="1"/>
</dbReference>
<dbReference type="InterPro" id="IPR016024">
    <property type="entry name" value="ARM-type_fold"/>
</dbReference>
<dbReference type="InterPro" id="IPR045237">
    <property type="entry name" value="COPS7/eIF3m"/>
</dbReference>
<dbReference type="InterPro" id="IPR027528">
    <property type="entry name" value="eIF3m"/>
</dbReference>
<dbReference type="InterPro" id="IPR040750">
    <property type="entry name" value="eIF3m_C_helix"/>
</dbReference>
<dbReference type="InterPro" id="IPR000717">
    <property type="entry name" value="PCI_dom"/>
</dbReference>
<dbReference type="InterPro" id="IPR036390">
    <property type="entry name" value="WH_DNA-bd_sf"/>
</dbReference>
<dbReference type="PANTHER" id="PTHR15350">
    <property type="entry name" value="COP9 SIGNALOSOME COMPLEX SUBUNIT 7/DENDRITIC CELL PROTEIN GA17"/>
    <property type="match status" value="1"/>
</dbReference>
<dbReference type="PANTHER" id="PTHR15350:SF2">
    <property type="entry name" value="EUKARYOTIC TRANSLATION INITIATION FACTOR 3 SUBUNIT M"/>
    <property type="match status" value="1"/>
</dbReference>
<dbReference type="Pfam" id="PF18005">
    <property type="entry name" value="eIF3m_C_helix"/>
    <property type="match status" value="1"/>
</dbReference>
<dbReference type="Pfam" id="PF01399">
    <property type="entry name" value="PCI"/>
    <property type="match status" value="1"/>
</dbReference>
<dbReference type="SMART" id="SM00088">
    <property type="entry name" value="PINT"/>
    <property type="match status" value="1"/>
</dbReference>
<dbReference type="SUPFAM" id="SSF48371">
    <property type="entry name" value="ARM repeat"/>
    <property type="match status" value="1"/>
</dbReference>
<dbReference type="SUPFAM" id="SSF46785">
    <property type="entry name" value="Winged helix' DNA-binding domain"/>
    <property type="match status" value="1"/>
</dbReference>
<dbReference type="PROSITE" id="PS50250">
    <property type="entry name" value="PCI"/>
    <property type="match status" value="1"/>
</dbReference>
<feature type="chain" id="PRO_0000365996" description="Eukaryotic translation initiation factor 3 subunit M">
    <location>
        <begin position="1"/>
        <end position="385"/>
    </location>
</feature>
<feature type="domain" description="PCI" evidence="2">
    <location>
        <begin position="180"/>
        <end position="342"/>
    </location>
</feature>
<name>EIF3M_ANOGA</name>
<keyword id="KW-0963">Cytoplasm</keyword>
<keyword id="KW-0396">Initiation factor</keyword>
<keyword id="KW-0648">Protein biosynthesis</keyword>
<keyword id="KW-1185">Reference proteome</keyword>
<sequence>MQGPAVFIDAEIDDQAQELRQFLKGLGAEISEEKSTKGIEDDLHKIIGVCDVCFKDNTHSPEEIDAVLNSIVSIIVSIPLERGENLILSFCDKMTKAKETSLARVCLQSLWRLFSNLEVTSPLRYHVYYHLVQVAKQVNQVKEVFTGVEQLKAQFAQCPPSNEQMQKLYRLLHDVLKDSNSELASKVMIELLGTYTAENASYAREDAMKCIVTALADPNTFLLDPLLSLKPVRFLEGELIHDLLSVFVSEKLPSYLEFYKNHKEFVNSQGLNHEQNIKKMRLLSFMQLAESNSEMTFQQLQDELQIKEEEVEPFIIEVLKTKLVRARMDQRARKVHISSTMHRTFGRPQWQQLRDLLLSWKSNLTLVQENINTVSAAQMELAQRQ</sequence>